<proteinExistence type="evidence at protein level"/>
<gene>
    <name type="primary">THIC</name>
    <name type="synonym">PY</name>
    <name type="ordered locus">At2g29630</name>
    <name type="ORF">T27A16.27</name>
</gene>
<reference key="1">
    <citation type="journal article" date="1999" name="Nature">
        <title>Sequence and analysis of chromosome 2 of the plant Arabidopsis thaliana.</title>
        <authorList>
            <person name="Lin X."/>
            <person name="Kaul S."/>
            <person name="Rounsley S.D."/>
            <person name="Shea T.P."/>
            <person name="Benito M.-I."/>
            <person name="Town C.D."/>
            <person name="Fujii C.Y."/>
            <person name="Mason T.M."/>
            <person name="Bowman C.L."/>
            <person name="Barnstead M.E."/>
            <person name="Feldblyum T.V."/>
            <person name="Buell C.R."/>
            <person name="Ketchum K.A."/>
            <person name="Lee J.J."/>
            <person name="Ronning C.M."/>
            <person name="Koo H.L."/>
            <person name="Moffat K.S."/>
            <person name="Cronin L.A."/>
            <person name="Shen M."/>
            <person name="Pai G."/>
            <person name="Van Aken S."/>
            <person name="Umayam L."/>
            <person name="Tallon L.J."/>
            <person name="Gill J.E."/>
            <person name="Adams M.D."/>
            <person name="Carrera A.J."/>
            <person name="Creasy T.H."/>
            <person name="Goodman H.M."/>
            <person name="Somerville C.R."/>
            <person name="Copenhaver G.P."/>
            <person name="Preuss D."/>
            <person name="Nierman W.C."/>
            <person name="White O."/>
            <person name="Eisen J.A."/>
            <person name="Salzberg S.L."/>
            <person name="Fraser C.M."/>
            <person name="Venter J.C."/>
        </authorList>
    </citation>
    <scope>NUCLEOTIDE SEQUENCE [LARGE SCALE GENOMIC DNA]</scope>
    <source>
        <strain>cv. Columbia</strain>
    </source>
</reference>
<reference key="2">
    <citation type="journal article" date="2017" name="Plant J.">
        <title>Araport11: a complete reannotation of the Arabidopsis thaliana reference genome.</title>
        <authorList>
            <person name="Cheng C.Y."/>
            <person name="Krishnakumar V."/>
            <person name="Chan A.P."/>
            <person name="Thibaud-Nissen F."/>
            <person name="Schobel S."/>
            <person name="Town C.D."/>
        </authorList>
    </citation>
    <scope>GENOME REANNOTATION</scope>
    <source>
        <strain>cv. Columbia</strain>
    </source>
</reference>
<reference key="3">
    <citation type="journal article" date="2003" name="Science">
        <title>Empirical analysis of transcriptional activity in the Arabidopsis genome.</title>
        <authorList>
            <person name="Yamada K."/>
            <person name="Lim J."/>
            <person name="Dale J.M."/>
            <person name="Chen H."/>
            <person name="Shinn P."/>
            <person name="Palm C.J."/>
            <person name="Southwick A.M."/>
            <person name="Wu H.C."/>
            <person name="Kim C.J."/>
            <person name="Nguyen M."/>
            <person name="Pham P.K."/>
            <person name="Cheuk R.F."/>
            <person name="Karlin-Newmann G."/>
            <person name="Liu S.X."/>
            <person name="Lam B."/>
            <person name="Sakano H."/>
            <person name="Wu T."/>
            <person name="Yu G."/>
            <person name="Miranda M."/>
            <person name="Quach H.L."/>
            <person name="Tripp M."/>
            <person name="Chang C.H."/>
            <person name="Lee J.M."/>
            <person name="Toriumi M.J."/>
            <person name="Chan M.M."/>
            <person name="Tang C.C."/>
            <person name="Onodera C.S."/>
            <person name="Deng J.M."/>
            <person name="Akiyama K."/>
            <person name="Ansari Y."/>
            <person name="Arakawa T."/>
            <person name="Banh J."/>
            <person name="Banno F."/>
            <person name="Bowser L."/>
            <person name="Brooks S.Y."/>
            <person name="Carninci P."/>
            <person name="Chao Q."/>
            <person name="Choy N."/>
            <person name="Enju A."/>
            <person name="Goldsmith A.D."/>
            <person name="Gurjal M."/>
            <person name="Hansen N.F."/>
            <person name="Hayashizaki Y."/>
            <person name="Johnson-Hopson C."/>
            <person name="Hsuan V.W."/>
            <person name="Iida K."/>
            <person name="Karnes M."/>
            <person name="Khan S."/>
            <person name="Koesema E."/>
            <person name="Ishida J."/>
            <person name="Jiang P.X."/>
            <person name="Jones T."/>
            <person name="Kawai J."/>
            <person name="Kamiya A."/>
            <person name="Meyers C."/>
            <person name="Nakajima M."/>
            <person name="Narusaka M."/>
            <person name="Seki M."/>
            <person name="Sakurai T."/>
            <person name="Satou M."/>
            <person name="Tamse R."/>
            <person name="Vaysberg M."/>
            <person name="Wallender E.K."/>
            <person name="Wong C."/>
            <person name="Yamamura Y."/>
            <person name="Yuan S."/>
            <person name="Shinozaki K."/>
            <person name="Davis R.W."/>
            <person name="Theologis A."/>
            <person name="Ecker J.R."/>
        </authorList>
    </citation>
    <scope>NUCLEOTIDE SEQUENCE [LARGE SCALE MRNA]</scope>
    <source>
        <strain>cv. Columbia</strain>
    </source>
</reference>
<reference key="4">
    <citation type="journal article" date="2006" name="Science">
        <title>Structure of the eukaryotic thiamine pyrophosphate riboswitch with its regulatory ligand.</title>
        <authorList>
            <person name="Thore S."/>
            <person name="Leibundgut M."/>
            <person name="Ban N."/>
        </authorList>
    </citation>
    <scope>REPRESSION BY THIAMINE VIA RIBOSWITCH REGULATION</scope>
</reference>
<reference key="5">
    <citation type="journal article" date="2007" name="Plant Cell">
        <title>Riboswitch control of gene expression in plants by splicing and alternative 3' end processing of mRNAs.</title>
        <authorList>
            <person name="Wachter A."/>
            <person name="Tunc-Ozdemir M."/>
            <person name="Grove B.C."/>
            <person name="Green P.J."/>
            <person name="Shintani D.K."/>
            <person name="Breaker R.R."/>
        </authorList>
    </citation>
    <scope>REPRESSION BY THIAMINE VIA RIBOSWITCH REGULATION</scope>
    <source>
        <strain>cv. Columbia</strain>
    </source>
</reference>
<reference key="6">
    <citation type="journal article" date="2007" name="Proc. Natl. Acad. Sci. U.S.A.">
        <title>Vitamin B1 biosynthesis in plants requires the essential iron sulfur cluster protein, THIC.</title>
        <authorList>
            <person name="Raschke M."/>
            <person name="Buerkle L."/>
            <person name="Mueller N."/>
            <person name="Nunes-Nesi A."/>
            <person name="Fernie A.R."/>
            <person name="Arigoni D."/>
            <person name="Amrhein N."/>
            <person name="Fitzpatrick T.B."/>
        </authorList>
    </citation>
    <scope>FUNCTION</scope>
    <scope>DISRUPTION PHENOTYPE</scope>
    <scope>TISSUE SPECIFICITY</scope>
    <scope>DEVELOPMENTAL STAGE</scope>
    <scope>SUBCELLULAR LOCATION</scope>
    <scope>INDUCTION BY LIGHT</scope>
    <scope>COFACTOR</scope>
    <source>
        <strain>cv. Columbia</strain>
    </source>
</reference>
<reference key="7">
    <citation type="journal article" date="2008" name="Cell Res.">
        <title>AtTHIC, a gene involved in thiamine biosynthesis in Arabidopsis thaliana.</title>
        <authorList>
            <person name="Kong D."/>
            <person name="Zhu Y."/>
            <person name="Wu H."/>
            <person name="Cheng X."/>
            <person name="Liang H."/>
            <person name="Ling H.-Q."/>
        </authorList>
    </citation>
    <scope>FUNCTION</scope>
    <scope>DISRUPTION PHENOTYPE</scope>
    <scope>SUBCELLULAR LOCATION</scope>
    <scope>INDUCTION</scope>
    <scope>DEVELOPMENTAL STAGE</scope>
    <source>
        <strain>cv. Columbia</strain>
    </source>
</reference>
<reference key="8">
    <citation type="journal article" date="2008" name="PLoS ONE">
        <title>Sorting signals, N-terminal modifications and abundance of the chloroplast proteome.</title>
        <authorList>
            <person name="Zybailov B."/>
            <person name="Rutschow H."/>
            <person name="Friso G."/>
            <person name="Rudella A."/>
            <person name="Emanuelsson O."/>
            <person name="Sun Q."/>
            <person name="van Wijk K.J."/>
        </authorList>
    </citation>
    <scope>IDENTIFICATION BY MASS SPECTROMETRY</scope>
    <scope>SUBCELLULAR LOCATION [LARGE SCALE ANALYSIS]</scope>
</reference>
<reference key="9">
    <citation type="journal article" date="2012" name="BMC Plant Biol.">
        <title>The upregulation of thiamine (vitamin B1) biosynthesis in Arabidopsis thaliana seedlings under salt and osmotic stress conditions is mediated by abscisic acid at the early stages of this stress response.</title>
        <authorList>
            <person name="Rapala-Kozik M."/>
            <person name="Wolak N."/>
            <person name="Kujda M."/>
            <person name="Banas A.K."/>
        </authorList>
    </citation>
    <scope>INDUCTION BY ABSCISIC ACID; SALT AND OSMOTIC STRESS</scope>
</reference>
<reference key="10">
    <citation type="journal article" date="2013" name="Plant Cell">
        <title>Orchestration of thiamin biosynthesis and central metabolism by combined action of the thiamin pyrophosphate riboswitch and the circadian clock in Arabidopsis.</title>
        <authorList>
            <person name="Bocobza S.E."/>
            <person name="Malitsky S."/>
            <person name="Araujo W.L."/>
            <person name="Nunes-Nesi A."/>
            <person name="Meir S."/>
            <person name="Shapira M."/>
            <person name="Fernie A.R."/>
            <person name="Aharoni A."/>
        </authorList>
    </citation>
    <scope>INDUCTION</scope>
    <scope>TISSUE SPECIFICITY</scope>
</reference>
<reference key="11">
    <citation type="journal article" date="2014" name="Biochem. J.">
        <title>Salvage of the thiamin pyrimidine moiety by plant TenA proteins lacking an active-site cysteine.</title>
        <authorList>
            <person name="Zallot R."/>
            <person name="Yazdani M."/>
            <person name="Goyer A."/>
            <person name="Ziemak M.J."/>
            <person name="Guan J.C."/>
            <person name="McCarty D.R."/>
            <person name="de Crecy-Lagard V."/>
            <person name="Gerdes S."/>
            <person name="Garrett T.J."/>
            <person name="Benach J."/>
            <person name="Hunt J.F."/>
            <person name="Shintani D.K."/>
            <person name="Hanson A.D."/>
        </authorList>
    </citation>
    <scope>TISSUE SPECIFICITY</scope>
    <scope>DEVELOPMENTAL STAGE</scope>
</reference>
<reference key="12">
    <citation type="journal article" date="2013" name="J. Struct. Biol.">
        <title>High-resolution crystal structure of the eukaryotic HMP-P synthase (THIC) from Arabidopsis thaliana.</title>
        <authorList>
            <person name="Coquille S."/>
            <person name="Roux C."/>
            <person name="Mehta A."/>
            <person name="Begley T.P."/>
            <person name="Fitzpatrick T.B."/>
            <person name="Thore S."/>
        </authorList>
    </citation>
    <scope>X-RAY CRYSTALLOGRAPHY (1.60 ANGSTROMS) OF 72-644</scope>
    <scope>SUBUNIT</scope>
</reference>
<name>THIC_ARATH</name>
<keyword id="KW-0002">3D-structure</keyword>
<keyword id="KW-0004">4Fe-4S</keyword>
<keyword id="KW-0150">Chloroplast</keyword>
<keyword id="KW-0408">Iron</keyword>
<keyword id="KW-0411">Iron-sulfur</keyword>
<keyword id="KW-0456">Lyase</keyword>
<keyword id="KW-0479">Metal-binding</keyword>
<keyword id="KW-0934">Plastid</keyword>
<keyword id="KW-1185">Reference proteome</keyword>
<keyword id="KW-0949">S-adenosyl-L-methionine</keyword>
<keyword id="KW-0784">Thiamine biosynthesis</keyword>
<keyword id="KW-0809">Transit peptide</keyword>
<keyword id="KW-0862">Zinc</keyword>
<sequence length="644" mass="71987">MAASVHCTLMSVVCNNKNHSARPKLPNSSLLPGFDVVVQAAATRFKKETTTTRATLTFDPPTTNSERAKQRKHTIDPSSPDFQPIPSFEECFPKSTKEHKEVVHEESGHVLKVPFRRVHLSGGEPAFDNYDTSGPQNVNAHIGLAKLRKEWIDRREKLGTPRYTQMYYAKQGIITEEMLYCATREKLDPEFVRSEVARGRAIIPSNKKHLELEPMIVGRKFLVKVNANIGNSAVASSIEEEVYKVQWATMWGADTIMDLSTGRHIHETREWILRNSAVPVGTVPIYQALEKVDGIAENLNWEVFRETLIEQAEQGVDYFTIHAGVLLRYIPLTAKRLTGIVSRGGSIHAKWCLAYHKENFAYEHWDDILDICNQYDVALSIGDGLRPGSIYDANDTAQFAELLTQGELTRRAWEKDVQVMNEGPGHVPMHKIPENMQKQLEWCNEAPFYTLGPLTTDIAPGYDHITSAIGAANIGALGTALLCYVTPKEHLGLPNRDDVKAGVIAYKIAAHAADLAKQHPHAQAWDDALSKARFEFRWMDQFALSLDPMTAMSFHDETLPADGAKVAHFCSMCGPKFCSMKITEDIRKYAEENGYGSAEEAIRQGMDAMSEEFNIAKKTISGEQHGEVGGEIYLPESYVKAAQK</sequence>
<protein>
    <recommendedName>
        <fullName>Phosphomethylpyrimidine synthase, chloroplastic</fullName>
        <ecNumber>4.1.99.17</ecNumber>
    </recommendedName>
    <alternativeName>
        <fullName>Hydroxymethylpyrimidine phosphate synthase</fullName>
        <shortName>HMP-P synthase</shortName>
        <shortName>HMP-phosphate synthase</shortName>
        <shortName>HMPP synthase</shortName>
    </alternativeName>
    <alternativeName>
        <fullName>Protein PYRIMIDINE REQUIRING</fullName>
    </alternativeName>
    <alternativeName>
        <fullName>Thiamine biosynthesis protein ThiC</fullName>
        <shortName>Protein THIAMINE C</shortName>
    </alternativeName>
</protein>
<accession>O82392</accession>
<organism>
    <name type="scientific">Arabidopsis thaliana</name>
    <name type="common">Mouse-ear cress</name>
    <dbReference type="NCBI Taxonomy" id="3702"/>
    <lineage>
        <taxon>Eukaryota</taxon>
        <taxon>Viridiplantae</taxon>
        <taxon>Streptophyta</taxon>
        <taxon>Embryophyta</taxon>
        <taxon>Tracheophyta</taxon>
        <taxon>Spermatophyta</taxon>
        <taxon>Magnoliopsida</taxon>
        <taxon>eudicotyledons</taxon>
        <taxon>Gunneridae</taxon>
        <taxon>Pentapetalae</taxon>
        <taxon>rosids</taxon>
        <taxon>malvids</taxon>
        <taxon>Brassicales</taxon>
        <taxon>Brassicaceae</taxon>
        <taxon>Camelineae</taxon>
        <taxon>Arabidopsis</taxon>
    </lineage>
</organism>
<evidence type="ECO:0000250" key="1">
    <source>
        <dbReference type="UniProtKB" id="Q9A6Q5"/>
    </source>
</evidence>
<evidence type="ECO:0000256" key="2">
    <source>
        <dbReference type="SAM" id="MobiDB-lite"/>
    </source>
</evidence>
<evidence type="ECO:0000269" key="3">
    <source>
    </source>
</evidence>
<evidence type="ECO:0000269" key="4">
    <source>
    </source>
</evidence>
<evidence type="ECO:0000269" key="5">
    <source>
    </source>
</evidence>
<evidence type="ECO:0000269" key="6">
    <source>
    </source>
</evidence>
<evidence type="ECO:0000269" key="7">
    <source>
    </source>
</evidence>
<evidence type="ECO:0000269" key="8">
    <source>
    </source>
</evidence>
<evidence type="ECO:0000269" key="9">
    <source>
    </source>
</evidence>
<evidence type="ECO:0000269" key="10">
    <source>
    </source>
</evidence>
<evidence type="ECO:0000269" key="11">
    <source>
    </source>
</evidence>
<evidence type="ECO:0000305" key="12"/>
<evidence type="ECO:0000305" key="13">
    <source>
    </source>
</evidence>
<evidence type="ECO:0007829" key="14">
    <source>
        <dbReference type="PDB" id="4N7Q"/>
    </source>
</evidence>
<evidence type="ECO:0007829" key="15">
    <source>
        <dbReference type="PDB" id="4S28"/>
    </source>
</evidence>
<comment type="function">
    <text evidence="5 6">Catalyzes the synthesis of the hydroxymethylpyrimidine phosphate (HMP-P) moiety of thiamine from aminoimidazole ribotide (AIR) in a radical S-adenosyl-L-methionine (SAM)-dependent reaction.</text>
</comment>
<comment type="catalytic activity">
    <reaction>
        <text>5-amino-1-(5-phospho-beta-D-ribosyl)imidazole + S-adenosyl-L-methionine = 4-amino-2-methyl-5-(phosphooxymethyl)pyrimidine + CO + 5'-deoxyadenosine + formate + L-methionine + 3 H(+)</text>
        <dbReference type="Rhea" id="RHEA:24840"/>
        <dbReference type="ChEBI" id="CHEBI:15378"/>
        <dbReference type="ChEBI" id="CHEBI:15740"/>
        <dbReference type="ChEBI" id="CHEBI:17245"/>
        <dbReference type="ChEBI" id="CHEBI:17319"/>
        <dbReference type="ChEBI" id="CHEBI:57844"/>
        <dbReference type="ChEBI" id="CHEBI:58354"/>
        <dbReference type="ChEBI" id="CHEBI:59789"/>
        <dbReference type="ChEBI" id="CHEBI:137981"/>
        <dbReference type="EC" id="4.1.99.17"/>
    </reaction>
</comment>
<comment type="cofactor">
    <cofactor evidence="5 13">
        <name>[4Fe-4S] cluster</name>
        <dbReference type="ChEBI" id="CHEBI:49883"/>
    </cofactor>
    <text evidence="5">Binds 1 [4Fe-4S] cluster per subunit. The cluster is coordinated with 3 cysteines and an exchangeable S-adenosyl-L-methionine.</text>
</comment>
<comment type="pathway">
    <text>Cofactor biosynthesis; thiamine diphosphate biosynthesis.</text>
</comment>
<comment type="subunit">
    <text evidence="10">Homodimer.</text>
</comment>
<comment type="subcellular location">
    <subcellularLocation>
        <location evidence="5 6 7">Plastid</location>
        <location evidence="5 6 7">Chloroplast stroma</location>
    </subcellularLocation>
</comment>
<comment type="tissue specificity">
    <text evidence="5 9 11">Strongly expressed in cotyledons, leaves, flowers and siliques, and, to a lower extent, in roots (PubMed:18048325, PubMed:25014715). Expressed in all green tissues, but not in roots, seeds, and petals (PubMed:23341335).</text>
</comment>
<comment type="developmental stage">
    <text evidence="5 6 11">First detected in five-days seedlings. In seedlings, mostly present at the root tips and in the jointed section between the hypocotyl and root. In two-leaves seedlings, expressed in leaves, cotyledons and vascular bundles of hypocotyls, and very weakly, in the roots. In flowers, detected in sepals, filaments and pistil tips, but not in petals. Later accumulates in the jointed region between the silique and silique stem, and in the tips of siliques. Decreasing expression during seed development (PubMed:25014715).</text>
</comment>
<comment type="induction">
    <text evidence="3 4 5 6 8 9">Circadian-regulation (PubMed:23341335). Down-regulated by extrinsic thiamine, via a vitamin B1 derivative thiamine pyrophosphate (TPP)-sensing riboswitch regulation. Detected in both dark and light grown seedlings; increased progressively after transfer of etiolated seedlings to light. Up-regulated by salt, osmotic stress and abscisic acid (PubMed:22214485).</text>
</comment>
<comment type="disruption phenotype">
    <text evidence="5 6">Albino (white leaves) and lethal under normal culture conditions, probably due to an impairment in thiamine biosynthesis.</text>
</comment>
<comment type="similarity">
    <text evidence="12">Belongs to the ThiC family.</text>
</comment>
<feature type="transit peptide" description="Chloroplast" evidence="12">
    <location>
        <begin position="1"/>
        <end position="54"/>
    </location>
</feature>
<feature type="chain" id="PRO_0000415518" description="Phosphomethylpyrimidine synthase, chloroplastic">
    <location>
        <begin position="55"/>
        <end position="644"/>
    </location>
</feature>
<feature type="region of interest" description="Disordered" evidence="2">
    <location>
        <begin position="55"/>
        <end position="83"/>
    </location>
</feature>
<feature type="binding site" evidence="1">
    <location>
        <position position="228"/>
    </location>
    <ligand>
        <name>substrate</name>
    </ligand>
</feature>
<feature type="binding site" evidence="1">
    <location>
        <position position="257"/>
    </location>
    <ligand>
        <name>substrate</name>
    </ligand>
</feature>
<feature type="binding site" evidence="1">
    <location>
        <position position="286"/>
    </location>
    <ligand>
        <name>substrate</name>
    </ligand>
</feature>
<feature type="binding site" evidence="1">
    <location>
        <position position="322"/>
    </location>
    <ligand>
        <name>substrate</name>
    </ligand>
</feature>
<feature type="binding site" evidence="1">
    <location>
        <begin position="342"/>
        <end position="344"/>
    </location>
    <ligand>
        <name>substrate</name>
    </ligand>
</feature>
<feature type="binding site" evidence="1">
    <location>
        <begin position="383"/>
        <end position="386"/>
    </location>
    <ligand>
        <name>substrate</name>
    </ligand>
</feature>
<feature type="binding site" evidence="1">
    <location>
        <position position="422"/>
    </location>
    <ligand>
        <name>substrate</name>
    </ligand>
</feature>
<feature type="binding site" evidence="13">
    <location>
        <position position="426"/>
    </location>
    <ligand>
        <name>Zn(2+)</name>
        <dbReference type="ChEBI" id="CHEBI:29105"/>
    </ligand>
</feature>
<feature type="binding site" evidence="1">
    <location>
        <position position="449"/>
    </location>
    <ligand>
        <name>substrate</name>
    </ligand>
</feature>
<feature type="binding site" evidence="13">
    <location>
        <position position="490"/>
    </location>
    <ligand>
        <name>Zn(2+)</name>
        <dbReference type="ChEBI" id="CHEBI:29105"/>
    </ligand>
</feature>
<feature type="binding site" evidence="1">
    <location>
        <position position="570"/>
    </location>
    <ligand>
        <name>[4Fe-4S] cluster</name>
        <dbReference type="ChEBI" id="CHEBI:49883"/>
        <note>4Fe-4S-S-AdoMet</note>
    </ligand>
</feature>
<feature type="binding site" evidence="1">
    <location>
        <position position="573"/>
    </location>
    <ligand>
        <name>[4Fe-4S] cluster</name>
        <dbReference type="ChEBI" id="CHEBI:49883"/>
        <note>4Fe-4S-S-AdoMet</note>
    </ligand>
</feature>
<feature type="binding site" evidence="1">
    <location>
        <position position="578"/>
    </location>
    <ligand>
        <name>[4Fe-4S] cluster</name>
        <dbReference type="ChEBI" id="CHEBI:49883"/>
        <note>4Fe-4S-S-AdoMet</note>
    </ligand>
</feature>
<feature type="helix" evidence="15">
    <location>
        <begin position="88"/>
        <end position="91"/>
    </location>
</feature>
<feature type="strand" evidence="15">
    <location>
        <begin position="95"/>
        <end position="104"/>
    </location>
</feature>
<feature type="turn" evidence="15">
    <location>
        <begin position="105"/>
        <end position="108"/>
    </location>
</feature>
<feature type="strand" evidence="15">
    <location>
        <begin position="109"/>
        <end position="118"/>
    </location>
</feature>
<feature type="strand" evidence="15">
    <location>
        <begin position="127"/>
        <end position="129"/>
    </location>
</feature>
<feature type="strand" evidence="14">
    <location>
        <begin position="135"/>
        <end position="137"/>
    </location>
</feature>
<feature type="turn" evidence="15">
    <location>
        <begin position="140"/>
        <end position="142"/>
    </location>
</feature>
<feature type="helix" evidence="15">
    <location>
        <begin position="149"/>
        <end position="158"/>
    </location>
</feature>
<feature type="helix" evidence="15">
    <location>
        <begin position="165"/>
        <end position="170"/>
    </location>
</feature>
<feature type="helix" evidence="15">
    <location>
        <begin position="176"/>
        <end position="185"/>
    </location>
</feature>
<feature type="helix" evidence="15">
    <location>
        <begin position="189"/>
        <end position="197"/>
    </location>
</feature>
<feature type="strand" evidence="15">
    <location>
        <begin position="200"/>
        <end position="202"/>
    </location>
</feature>
<feature type="strand" evidence="15">
    <location>
        <begin position="224"/>
        <end position="229"/>
    </location>
</feature>
<feature type="strand" evidence="15">
    <location>
        <begin position="233"/>
        <end position="235"/>
    </location>
</feature>
<feature type="helix" evidence="15">
    <location>
        <begin position="238"/>
        <end position="250"/>
    </location>
</feature>
<feature type="strand" evidence="15">
    <location>
        <begin position="254"/>
        <end position="258"/>
    </location>
</feature>
<feature type="helix" evidence="15">
    <location>
        <begin position="265"/>
        <end position="274"/>
    </location>
</feature>
<feature type="strand" evidence="15">
    <location>
        <begin position="280"/>
        <end position="282"/>
    </location>
</feature>
<feature type="helix" evidence="15">
    <location>
        <begin position="284"/>
        <end position="291"/>
    </location>
</feature>
<feature type="turn" evidence="15">
    <location>
        <begin position="292"/>
        <end position="294"/>
    </location>
</feature>
<feature type="helix" evidence="15">
    <location>
        <begin position="296"/>
        <end position="298"/>
    </location>
</feature>
<feature type="helix" evidence="15">
    <location>
        <begin position="301"/>
        <end position="314"/>
    </location>
</feature>
<feature type="strand" evidence="15">
    <location>
        <begin position="318"/>
        <end position="321"/>
    </location>
</feature>
<feature type="helix" evidence="15">
    <location>
        <begin position="327"/>
        <end position="333"/>
    </location>
</feature>
<feature type="helix" evidence="15">
    <location>
        <begin position="343"/>
        <end position="355"/>
    </location>
</feature>
<feature type="helix" evidence="15">
    <location>
        <begin position="360"/>
        <end position="363"/>
    </location>
</feature>
<feature type="helix" evidence="15">
    <location>
        <begin position="365"/>
        <end position="375"/>
    </location>
</feature>
<feature type="strand" evidence="15">
    <location>
        <begin position="378"/>
        <end position="381"/>
    </location>
</feature>
<feature type="helix" evidence="15">
    <location>
        <begin position="390"/>
        <end position="392"/>
    </location>
</feature>
<feature type="helix" evidence="15">
    <location>
        <begin position="396"/>
        <end position="414"/>
    </location>
</feature>
<feature type="strand" evidence="15">
    <location>
        <begin position="419"/>
        <end position="423"/>
    </location>
</feature>
<feature type="helix" evidence="15">
    <location>
        <begin position="429"/>
        <end position="431"/>
    </location>
</feature>
<feature type="helix" evidence="15">
    <location>
        <begin position="432"/>
        <end position="442"/>
    </location>
</feature>
<feature type="turn" evidence="15">
    <location>
        <begin position="443"/>
        <end position="445"/>
    </location>
</feature>
<feature type="strand" evidence="15">
    <location>
        <begin position="448"/>
        <end position="451"/>
    </location>
</feature>
<feature type="helix" evidence="15">
    <location>
        <begin position="463"/>
        <end position="476"/>
    </location>
</feature>
<feature type="strand" evidence="15">
    <location>
        <begin position="481"/>
        <end position="483"/>
    </location>
</feature>
<feature type="turn" evidence="15">
    <location>
        <begin position="487"/>
        <end position="491"/>
    </location>
</feature>
<feature type="helix" evidence="15">
    <location>
        <begin position="496"/>
        <end position="516"/>
    </location>
</feature>
<feature type="turn" evidence="15">
    <location>
        <begin position="520"/>
        <end position="522"/>
    </location>
</feature>
<feature type="helix" evidence="15">
    <location>
        <begin position="523"/>
        <end position="534"/>
    </location>
</feature>
<feature type="helix" evidence="15">
    <location>
        <begin position="538"/>
        <end position="544"/>
    </location>
</feature>
<feature type="strand" evidence="15">
    <location>
        <begin position="545"/>
        <end position="547"/>
    </location>
</feature>
<feature type="helix" evidence="15">
    <location>
        <begin position="548"/>
        <end position="556"/>
    </location>
</feature>
<feature type="helix" evidence="15">
    <location>
        <begin position="562"/>
        <end position="566"/>
    </location>
</feature>
<feature type="turn" evidence="15">
    <location>
        <begin position="571"/>
        <end position="573"/>
    </location>
</feature>
<feature type="turn" evidence="15">
    <location>
        <begin position="575"/>
        <end position="577"/>
    </location>
</feature>
<feature type="helix" evidence="15">
    <location>
        <begin position="579"/>
        <end position="590"/>
    </location>
</feature>
<feature type="turn" evidence="15">
    <location>
        <begin position="591"/>
        <end position="593"/>
    </location>
</feature>
<dbReference type="EC" id="4.1.99.17"/>
<dbReference type="EMBL" id="AC005496">
    <property type="protein sequence ID" value="AAC35232.1"/>
    <property type="molecule type" value="Genomic_DNA"/>
</dbReference>
<dbReference type="EMBL" id="CP002685">
    <property type="protein sequence ID" value="AEC08281.1"/>
    <property type="molecule type" value="Genomic_DNA"/>
</dbReference>
<dbReference type="EMBL" id="CP002685">
    <property type="protein sequence ID" value="AEC08282.1"/>
    <property type="molecule type" value="Genomic_DNA"/>
</dbReference>
<dbReference type="EMBL" id="CP002685">
    <property type="protein sequence ID" value="AEC08283.1"/>
    <property type="molecule type" value="Genomic_DNA"/>
</dbReference>
<dbReference type="EMBL" id="AY092989">
    <property type="protein sequence ID" value="AAM12988.1"/>
    <property type="molecule type" value="mRNA"/>
</dbReference>
<dbReference type="EMBL" id="AY128756">
    <property type="protein sequence ID" value="AAM91156.1"/>
    <property type="molecule type" value="mRNA"/>
</dbReference>
<dbReference type="PIR" id="F84698">
    <property type="entry name" value="F84698"/>
</dbReference>
<dbReference type="RefSeq" id="NP_001189634.1">
    <property type="nucleotide sequence ID" value="NM_001202705.1"/>
</dbReference>
<dbReference type="RefSeq" id="NP_180524.1">
    <property type="nucleotide sequence ID" value="NM_128517.4"/>
</dbReference>
<dbReference type="RefSeq" id="NP_850135.1">
    <property type="nucleotide sequence ID" value="NM_179804.3"/>
</dbReference>
<dbReference type="PDB" id="4N7Q">
    <property type="method" value="X-ray"/>
    <property type="resolution" value="1.60 A"/>
    <property type="chains" value="A=72-644"/>
</dbReference>
<dbReference type="PDB" id="4S25">
    <property type="method" value="X-ray"/>
    <property type="resolution" value="1.45 A"/>
    <property type="chains" value="A=72-644"/>
</dbReference>
<dbReference type="PDB" id="4S26">
    <property type="method" value="X-ray"/>
    <property type="resolution" value="1.85 A"/>
    <property type="chains" value="A/B=72-644"/>
</dbReference>
<dbReference type="PDB" id="4S27">
    <property type="method" value="X-ray"/>
    <property type="resolution" value="1.27 A"/>
    <property type="chains" value="A=72-644"/>
</dbReference>
<dbReference type="PDB" id="4S28">
    <property type="method" value="X-ray"/>
    <property type="resolution" value="1.25 A"/>
    <property type="chains" value="A=72-644"/>
</dbReference>
<dbReference type="PDB" id="4S29">
    <property type="method" value="X-ray"/>
    <property type="resolution" value="1.38 A"/>
    <property type="chains" value="A=72-644"/>
</dbReference>
<dbReference type="PDBsum" id="4N7Q"/>
<dbReference type="PDBsum" id="4S25"/>
<dbReference type="PDBsum" id="4S26"/>
<dbReference type="PDBsum" id="4S27"/>
<dbReference type="PDBsum" id="4S28"/>
<dbReference type="PDBsum" id="4S29"/>
<dbReference type="SMR" id="O82392"/>
<dbReference type="BioGRID" id="2863">
    <property type="interactions" value="2"/>
</dbReference>
<dbReference type="FunCoup" id="O82392">
    <property type="interactions" value="728"/>
</dbReference>
<dbReference type="STRING" id="3702.O82392"/>
<dbReference type="iPTMnet" id="O82392"/>
<dbReference type="PaxDb" id="3702-AT2G29630.2"/>
<dbReference type="ProteomicsDB" id="246437"/>
<dbReference type="EnsemblPlants" id="AT2G29630.1">
    <property type="protein sequence ID" value="AT2G29630.1"/>
    <property type="gene ID" value="AT2G29630"/>
</dbReference>
<dbReference type="EnsemblPlants" id="AT2G29630.2">
    <property type="protein sequence ID" value="AT2G29630.2"/>
    <property type="gene ID" value="AT2G29630"/>
</dbReference>
<dbReference type="EnsemblPlants" id="AT2G29630.3">
    <property type="protein sequence ID" value="AT2G29630.3"/>
    <property type="gene ID" value="AT2G29630"/>
</dbReference>
<dbReference type="GeneID" id="817513"/>
<dbReference type="Gramene" id="AT2G29630.1">
    <property type="protein sequence ID" value="AT2G29630.1"/>
    <property type="gene ID" value="AT2G29630"/>
</dbReference>
<dbReference type="Gramene" id="AT2G29630.2">
    <property type="protein sequence ID" value="AT2G29630.2"/>
    <property type="gene ID" value="AT2G29630"/>
</dbReference>
<dbReference type="Gramene" id="AT2G29630.3">
    <property type="protein sequence ID" value="AT2G29630.3"/>
    <property type="gene ID" value="AT2G29630"/>
</dbReference>
<dbReference type="KEGG" id="ath:AT2G29630"/>
<dbReference type="Araport" id="AT2G29630"/>
<dbReference type="TAIR" id="AT2G29630">
    <property type="gene designation" value="THIC"/>
</dbReference>
<dbReference type="eggNOG" id="ENOG502QRQ4">
    <property type="taxonomic scope" value="Eukaryota"/>
</dbReference>
<dbReference type="HOGENOM" id="CLU_013181_2_1_1"/>
<dbReference type="InParanoid" id="O82392"/>
<dbReference type="PhylomeDB" id="O82392"/>
<dbReference type="BioCyc" id="ARA:AT2G29630-MONOMER"/>
<dbReference type="BioCyc" id="MetaCyc:AT2G29630-MONOMER"/>
<dbReference type="BRENDA" id="4.1.99.17">
    <property type="organism ID" value="399"/>
</dbReference>
<dbReference type="UniPathway" id="UPA00060"/>
<dbReference type="EvolutionaryTrace" id="O82392"/>
<dbReference type="PRO" id="PR:O82392"/>
<dbReference type="Proteomes" id="UP000006548">
    <property type="component" value="Chromosome 2"/>
</dbReference>
<dbReference type="ExpressionAtlas" id="O82392">
    <property type="expression patterns" value="baseline and differential"/>
</dbReference>
<dbReference type="GO" id="GO:0009507">
    <property type="term" value="C:chloroplast"/>
    <property type="evidence" value="ECO:0000314"/>
    <property type="project" value="TAIR"/>
</dbReference>
<dbReference type="GO" id="GO:0009570">
    <property type="term" value="C:chloroplast stroma"/>
    <property type="evidence" value="ECO:0000314"/>
    <property type="project" value="TAIR"/>
</dbReference>
<dbReference type="GO" id="GO:0009536">
    <property type="term" value="C:plastid"/>
    <property type="evidence" value="ECO:0000314"/>
    <property type="project" value="TAIR"/>
</dbReference>
<dbReference type="GO" id="GO:0051539">
    <property type="term" value="F:4 iron, 4 sulfur cluster binding"/>
    <property type="evidence" value="ECO:0007669"/>
    <property type="project" value="UniProtKB-KW"/>
</dbReference>
<dbReference type="GO" id="GO:0016830">
    <property type="term" value="F:carbon-carbon lyase activity"/>
    <property type="evidence" value="ECO:0007669"/>
    <property type="project" value="InterPro"/>
</dbReference>
<dbReference type="GO" id="GO:0051536">
    <property type="term" value="F:iron-sulfur cluster binding"/>
    <property type="evidence" value="ECO:0000314"/>
    <property type="project" value="TAIR"/>
</dbReference>
<dbReference type="GO" id="GO:0046872">
    <property type="term" value="F:metal ion binding"/>
    <property type="evidence" value="ECO:0007669"/>
    <property type="project" value="UniProtKB-KW"/>
</dbReference>
<dbReference type="GO" id="GO:0019904">
    <property type="term" value="F:protein domain specific binding"/>
    <property type="evidence" value="ECO:0000353"/>
    <property type="project" value="CAFA"/>
</dbReference>
<dbReference type="GO" id="GO:0010266">
    <property type="term" value="P:response to vitamin B1"/>
    <property type="evidence" value="ECO:0000270"/>
    <property type="project" value="TAIR"/>
</dbReference>
<dbReference type="GO" id="GO:0009228">
    <property type="term" value="P:thiamine biosynthetic process"/>
    <property type="evidence" value="ECO:0000315"/>
    <property type="project" value="TAIR"/>
</dbReference>
<dbReference type="GO" id="GO:0009229">
    <property type="term" value="P:thiamine diphosphate biosynthetic process"/>
    <property type="evidence" value="ECO:0007669"/>
    <property type="project" value="UniProtKB-UniPathway"/>
</dbReference>
<dbReference type="FunFam" id="3.20.20.540:FF:000001">
    <property type="entry name" value="Phosphomethylpyrimidine synthase"/>
    <property type="match status" value="1"/>
</dbReference>
<dbReference type="Gene3D" id="6.10.250.620">
    <property type="match status" value="1"/>
</dbReference>
<dbReference type="Gene3D" id="3.20.20.540">
    <property type="entry name" value="Radical SAM ThiC family, central domain"/>
    <property type="match status" value="1"/>
</dbReference>
<dbReference type="HAMAP" id="MF_00089">
    <property type="entry name" value="ThiC"/>
    <property type="match status" value="1"/>
</dbReference>
<dbReference type="InterPro" id="IPR037509">
    <property type="entry name" value="ThiC"/>
</dbReference>
<dbReference type="InterPro" id="IPR038521">
    <property type="entry name" value="ThiC/Bza_core_dom"/>
</dbReference>
<dbReference type="InterPro" id="IPR002817">
    <property type="entry name" value="ThiC/BzaA/B"/>
</dbReference>
<dbReference type="NCBIfam" id="NF006763">
    <property type="entry name" value="PRK09284.1"/>
    <property type="match status" value="1"/>
</dbReference>
<dbReference type="NCBIfam" id="NF009895">
    <property type="entry name" value="PRK13352.1"/>
    <property type="match status" value="1"/>
</dbReference>
<dbReference type="NCBIfam" id="TIGR00190">
    <property type="entry name" value="thiC"/>
    <property type="match status" value="1"/>
</dbReference>
<dbReference type="PANTHER" id="PTHR30557:SF1">
    <property type="entry name" value="PHOSPHOMETHYLPYRIMIDINE SYNTHASE, CHLOROPLASTIC"/>
    <property type="match status" value="1"/>
</dbReference>
<dbReference type="PANTHER" id="PTHR30557">
    <property type="entry name" value="THIAMINE BIOSYNTHESIS PROTEIN THIC"/>
    <property type="match status" value="1"/>
</dbReference>
<dbReference type="Pfam" id="PF01964">
    <property type="entry name" value="ThiC_Rad_SAM"/>
    <property type="match status" value="1"/>
</dbReference>
<dbReference type="SFLD" id="SFLDF00407">
    <property type="entry name" value="phosphomethylpyrimidine_syntha"/>
    <property type="match status" value="1"/>
</dbReference>
<dbReference type="SFLD" id="SFLDG01114">
    <property type="entry name" value="phosphomethylpyrimidine_syntha"/>
    <property type="match status" value="1"/>
</dbReference>
<dbReference type="SFLD" id="SFLDS00113">
    <property type="entry name" value="Radical_SAM_Phosphomethylpyrim"/>
    <property type="match status" value="1"/>
</dbReference>